<feature type="chain" id="PRO_0000445812" description="Hydroxynaphthalene reductase-like protein Arp2">
    <location>
        <begin position="1"/>
        <end position="267"/>
    </location>
</feature>
<feature type="active site" description="Proton donor" evidence="2">
    <location>
        <position position="147"/>
    </location>
</feature>
<feature type="active site" description="Proton donor" evidence="2">
    <location>
        <position position="148"/>
    </location>
</feature>
<feature type="active site" description="Proton acceptor" evidence="3">
    <location>
        <position position="162"/>
    </location>
</feature>
<feature type="active site" description="Lowers pKa of active site Tyr" evidence="2">
    <location>
        <position position="166"/>
    </location>
</feature>
<feature type="binding site" evidence="1">
    <location>
        <position position="25"/>
    </location>
    <ligand>
        <name>NADP(+)</name>
        <dbReference type="ChEBI" id="CHEBI:58349"/>
    </ligand>
</feature>
<feature type="binding site" evidence="1">
    <location>
        <position position="45"/>
    </location>
    <ligand>
        <name>NADP(+)</name>
        <dbReference type="ChEBI" id="CHEBI:58349"/>
    </ligand>
</feature>
<feature type="binding site" evidence="1">
    <location>
        <position position="71"/>
    </location>
    <ligand>
        <name>NADP(+)</name>
        <dbReference type="ChEBI" id="CHEBI:58349"/>
    </ligand>
</feature>
<feature type="binding site" evidence="2">
    <location>
        <position position="98"/>
    </location>
    <ligand>
        <name>NADP(+)</name>
        <dbReference type="ChEBI" id="CHEBI:58349"/>
    </ligand>
</feature>
<feature type="binding site" evidence="2">
    <location>
        <position position="162"/>
    </location>
    <ligand>
        <name>NADP(+)</name>
        <dbReference type="ChEBI" id="CHEBI:58349"/>
    </ligand>
</feature>
<feature type="binding site" evidence="2">
    <location>
        <position position="166"/>
    </location>
    <ligand>
        <name>NADP(+)</name>
        <dbReference type="ChEBI" id="CHEBI:58349"/>
    </ligand>
</feature>
<feature type="binding site" evidence="2">
    <location>
        <position position="195"/>
    </location>
    <ligand>
        <name>NADP(+)</name>
        <dbReference type="ChEBI" id="CHEBI:58349"/>
    </ligand>
</feature>
<feature type="binding site" evidence="1">
    <location>
        <position position="197"/>
    </location>
    <ligand>
        <name>NADP(+)</name>
        <dbReference type="ChEBI" id="CHEBI:58349"/>
    </ligand>
</feature>
<gene>
    <name evidence="5" type="primary">Arp2</name>
    <name type="ORF">MAN_00843</name>
</gene>
<protein>
    <recommendedName>
        <fullName evidence="5">Hydroxynaphthalene reductase-like protein Arp2</fullName>
        <ecNumber evidence="7">1.1.-.-</ecNumber>
    </recommendedName>
</protein>
<reference key="1">
    <citation type="journal article" date="2014" name="Proc. Natl. Acad. Sci. U.S.A.">
        <title>Trajectory and genomic determinants of fungal-pathogen speciation and host adaptation.</title>
        <authorList>
            <person name="Hu X."/>
            <person name="Xiao G."/>
            <person name="Zheng P."/>
            <person name="Shang Y."/>
            <person name="Su Y."/>
            <person name="Zhang X."/>
            <person name="Liu X."/>
            <person name="Zhan S."/>
            <person name="St Leger R.J."/>
            <person name="Wang C."/>
        </authorList>
    </citation>
    <scope>NUCLEOTIDE SEQUENCE [LARGE SCALE GENOMIC DNA]</scope>
    <source>
        <strain>ARSEF 549</strain>
    </source>
</reference>
<reference key="2">
    <citation type="journal article" date="2018" name="PLoS Genet.">
        <title>Duplication of a Pks gene cluster and subsequent functional diversification facilitate environmental adaptation in Metarhizium species.</title>
        <authorList>
            <person name="Zeng G."/>
            <person name="Zhang P."/>
            <person name="Zhang Q."/>
            <person name="Zhao H."/>
            <person name="Li Z."/>
            <person name="Zhang X."/>
            <person name="Wang C."/>
            <person name="Yin W.B."/>
            <person name="Fang W."/>
        </authorList>
    </citation>
    <scope>IDENTIFICATION</scope>
    <scope>FUNCTION</scope>
</reference>
<organism>
    <name type="scientific">Metarhizium anisopliae (strain ARSEF 549)</name>
    <dbReference type="NCBI Taxonomy" id="3151832"/>
    <lineage>
        <taxon>Eukaryota</taxon>
        <taxon>Fungi</taxon>
        <taxon>Dikarya</taxon>
        <taxon>Ascomycota</taxon>
        <taxon>Pezizomycotina</taxon>
        <taxon>Sordariomycetes</taxon>
        <taxon>Hypocreomycetidae</taxon>
        <taxon>Hypocreales</taxon>
        <taxon>Clavicipitaceae</taxon>
        <taxon>Metarhizium</taxon>
    </lineage>
</organism>
<proteinExistence type="inferred from homology"/>
<evidence type="ECO:0000250" key="1">
    <source>
        <dbReference type="UniProtKB" id="L0E2Z4"/>
    </source>
</evidence>
<evidence type="ECO:0000250" key="2">
    <source>
        <dbReference type="UniProtKB" id="O93868"/>
    </source>
</evidence>
<evidence type="ECO:0000255" key="3">
    <source>
        <dbReference type="PROSITE-ProRule" id="PRU10001"/>
    </source>
</evidence>
<evidence type="ECO:0000269" key="4">
    <source>
    </source>
</evidence>
<evidence type="ECO:0000303" key="5">
    <source>
    </source>
</evidence>
<evidence type="ECO:0000305" key="6"/>
<evidence type="ECO:0000305" key="7">
    <source>
    </source>
</evidence>
<accession>A0A0B4GT47</accession>
<comment type="function">
    <text evidence="4">Hydroxynaphthalene reductase-like protein; part of the Pks2 gene cluster that mediates the formation of infectious structures (appressoria), enabling these fungi to kill insects faster (PubMed:29958281). The product of the Pks2 gene cluster is different from the one of Pks1 and has still not been identified (PubMed:29958281).</text>
</comment>
<comment type="similarity">
    <text evidence="6">Belongs to the short-chain dehydrogenases/reductases (SDR) family.</text>
</comment>
<dbReference type="EC" id="1.1.-.-" evidence="7"/>
<dbReference type="EMBL" id="AZNF01000001">
    <property type="protein sequence ID" value="KID71244.1"/>
    <property type="molecule type" value="Genomic_DNA"/>
</dbReference>
<dbReference type="SMR" id="A0A0B4GT47"/>
<dbReference type="VEuPathDB" id="FungiDB:MAN_00843"/>
<dbReference type="HOGENOM" id="CLU_010194_1_3_1"/>
<dbReference type="OrthoDB" id="4954at5529"/>
<dbReference type="Proteomes" id="UP000031186">
    <property type="component" value="Unassembled WGS sequence"/>
</dbReference>
<dbReference type="GO" id="GO:0016491">
    <property type="term" value="F:oxidoreductase activity"/>
    <property type="evidence" value="ECO:0007669"/>
    <property type="project" value="UniProtKB-KW"/>
</dbReference>
<dbReference type="FunFam" id="3.40.50.720:FF:000084">
    <property type="entry name" value="Short-chain dehydrogenase reductase"/>
    <property type="match status" value="1"/>
</dbReference>
<dbReference type="Gene3D" id="3.40.50.720">
    <property type="entry name" value="NAD(P)-binding Rossmann-like Domain"/>
    <property type="match status" value="1"/>
</dbReference>
<dbReference type="InterPro" id="IPR036291">
    <property type="entry name" value="NAD(P)-bd_dom_sf"/>
</dbReference>
<dbReference type="InterPro" id="IPR020904">
    <property type="entry name" value="Sc_DH/Rdtase_CS"/>
</dbReference>
<dbReference type="InterPro" id="IPR002347">
    <property type="entry name" value="SDR_fam"/>
</dbReference>
<dbReference type="PANTHER" id="PTHR43639">
    <property type="entry name" value="OXIDOREDUCTASE, SHORT-CHAIN DEHYDROGENASE/REDUCTASE FAMILY (AFU_ORTHOLOGUE AFUA_5G02870)"/>
    <property type="match status" value="1"/>
</dbReference>
<dbReference type="PANTHER" id="PTHR43639:SF1">
    <property type="entry name" value="SHORT-CHAIN DEHYDROGENASE_REDUCTASE FAMILY PROTEIN"/>
    <property type="match status" value="1"/>
</dbReference>
<dbReference type="Pfam" id="PF13561">
    <property type="entry name" value="adh_short_C2"/>
    <property type="match status" value="1"/>
</dbReference>
<dbReference type="PRINTS" id="PR00081">
    <property type="entry name" value="GDHRDH"/>
</dbReference>
<dbReference type="PRINTS" id="PR00080">
    <property type="entry name" value="SDRFAMILY"/>
</dbReference>
<dbReference type="SMART" id="SM00822">
    <property type="entry name" value="PKS_KR"/>
    <property type="match status" value="1"/>
</dbReference>
<dbReference type="SUPFAM" id="SSF51735">
    <property type="entry name" value="NAD(P)-binding Rossmann-fold domains"/>
    <property type="match status" value="1"/>
</dbReference>
<dbReference type="PROSITE" id="PS00061">
    <property type="entry name" value="ADH_SHORT"/>
    <property type="match status" value="1"/>
</dbReference>
<sequence length="267" mass="28422">MASSEETPRSLAGKVALVTGAGRGIGKGIALELAKRGASLVINYNSAEKPAQEVVDEIAKTGSRAVAIKADITKVPEVSRLFQEALQHFGHLDIVVSNSGTEVFKPEEEVTEEDYDRVFNLNTRAQFFIAQHAYVHLRNGGRIVLMSSVAANMSGIPNHALYAGSKAAVEGFTRSFAVDAGHKKITVNAIAPGGVKTDMYDANAWHYVPNGKPGMPMEEIDKGLAAFCPLGRVAVPQDIGRVVAFLAHPDSEWVNGQVILLTGGSVT</sequence>
<keyword id="KW-0521">NADP</keyword>
<keyword id="KW-0560">Oxidoreductase</keyword>
<name>ARP2_METAF</name>